<feature type="signal peptide" evidence="1">
    <location>
        <begin position="1"/>
        <end position="23"/>
    </location>
</feature>
<feature type="chain" id="PRO_0000020584" description="Accessory gland protein Acp53Ea">
    <location>
        <begin position="24"/>
        <end position="120"/>
    </location>
</feature>
<feature type="sequence variant" description="In strain: ZIM56.">
    <original>T</original>
    <variation>A</variation>
    <location>
        <position position="7"/>
    </location>
</feature>
<feature type="sequence variant" description="In strain: M47.">
    <original>A</original>
    <variation>D</variation>
    <location>
        <position position="14"/>
    </location>
</feature>
<feature type="sequence variant" description="In strain: M47.">
    <original>T</original>
    <variation>L</variation>
    <location>
        <position position="21"/>
    </location>
</feature>
<feature type="sequence variant" description="In strain: ZIM26 and ZIM42.">
    <original>E</original>
    <variation>K</variation>
    <location>
        <position position="22"/>
    </location>
</feature>
<feature type="sequence variant" description="In strain: ZIM56.">
    <original>I</original>
    <variation>V</variation>
    <location>
        <position position="27"/>
    </location>
</feature>
<feature type="sequence variant" description="In strain: M09 and WS9.">
    <original>N</original>
    <variation>K</variation>
    <location>
        <position position="70"/>
    </location>
</feature>
<feature type="sequence variant" description="In strain: SFS 3.1.">
    <original>Y</original>
    <variation>C</variation>
    <location>
        <position position="72"/>
    </location>
</feature>
<feature type="sequence variant" description="In strain: ZIM30.">
    <original>V</original>
    <variation>D</variation>
    <location>
        <position position="83"/>
    </location>
</feature>
<feature type="sequence variant" description="In strain: ZIM2.">
    <original>Y</original>
    <variation>C</variation>
    <location>
        <position position="108"/>
    </location>
</feature>
<evidence type="ECO:0000255" key="1"/>
<evidence type="ECO:0000269" key="2">
    <source>
    </source>
</evidence>
<evidence type="ECO:0000305" key="3"/>
<dbReference type="EMBL" id="U85760">
    <property type="protein sequence ID" value="AAB96384.1"/>
    <property type="molecule type" value="mRNA"/>
</dbReference>
<dbReference type="EMBL" id="AY010593">
    <property type="protein sequence ID" value="AAG37375.1"/>
    <property type="molecule type" value="Genomic_DNA"/>
</dbReference>
<dbReference type="EMBL" id="AY010594">
    <property type="protein sequence ID" value="AAG37376.1"/>
    <property type="molecule type" value="Genomic_DNA"/>
</dbReference>
<dbReference type="EMBL" id="AY010595">
    <property type="protein sequence ID" value="AAG37377.1"/>
    <property type="molecule type" value="Genomic_DNA"/>
</dbReference>
<dbReference type="EMBL" id="AY010596">
    <property type="protein sequence ID" value="AAG37378.1"/>
    <property type="molecule type" value="Genomic_DNA"/>
</dbReference>
<dbReference type="EMBL" id="AY010597">
    <property type="protein sequence ID" value="AAG37379.1"/>
    <property type="molecule type" value="Genomic_DNA"/>
</dbReference>
<dbReference type="EMBL" id="AY010598">
    <property type="protein sequence ID" value="AAG37380.1"/>
    <property type="molecule type" value="Genomic_DNA"/>
</dbReference>
<dbReference type="EMBL" id="AY010599">
    <property type="protein sequence ID" value="AAG37381.1"/>
    <property type="molecule type" value="Genomic_DNA"/>
</dbReference>
<dbReference type="EMBL" id="AY010600">
    <property type="protein sequence ID" value="AAG37382.1"/>
    <property type="molecule type" value="Genomic_DNA"/>
</dbReference>
<dbReference type="EMBL" id="AY010601">
    <property type="protein sequence ID" value="AAG37383.1"/>
    <property type="molecule type" value="Genomic_DNA"/>
</dbReference>
<dbReference type="EMBL" id="AY010602">
    <property type="protein sequence ID" value="AAG37384.1"/>
    <property type="molecule type" value="Genomic_DNA"/>
</dbReference>
<dbReference type="EMBL" id="AY010603">
    <property type="protein sequence ID" value="AAG37385.1"/>
    <property type="molecule type" value="Genomic_DNA"/>
</dbReference>
<dbReference type="EMBL" id="AY010604">
    <property type="protein sequence ID" value="AAG37386.1"/>
    <property type="molecule type" value="Genomic_DNA"/>
</dbReference>
<dbReference type="EMBL" id="AY010605">
    <property type="protein sequence ID" value="AAG37387.1"/>
    <property type="molecule type" value="Genomic_DNA"/>
</dbReference>
<dbReference type="EMBL" id="AY010606">
    <property type="protein sequence ID" value="AAG37388.1"/>
    <property type="molecule type" value="Genomic_DNA"/>
</dbReference>
<dbReference type="EMBL" id="AY010607">
    <property type="protein sequence ID" value="AAG37389.1"/>
    <property type="molecule type" value="Genomic_DNA"/>
</dbReference>
<dbReference type="EMBL" id="AY344265">
    <property type="protein sequence ID" value="AAR04580.1"/>
    <property type="molecule type" value="Genomic_DNA"/>
</dbReference>
<dbReference type="EMBL" id="AY344266">
    <property type="protein sequence ID" value="AAR04581.1"/>
    <property type="molecule type" value="Genomic_DNA"/>
</dbReference>
<dbReference type="EMBL" id="AY344267">
    <property type="protein sequence ID" value="AAR04582.1"/>
    <property type="molecule type" value="Genomic_DNA"/>
</dbReference>
<dbReference type="EMBL" id="AY344268">
    <property type="protein sequence ID" value="AAR04583.1"/>
    <property type="molecule type" value="Genomic_DNA"/>
</dbReference>
<dbReference type="EMBL" id="AY344269">
    <property type="protein sequence ID" value="AAR04584.1"/>
    <property type="molecule type" value="Genomic_DNA"/>
</dbReference>
<dbReference type="EMBL" id="AY344270">
    <property type="protein sequence ID" value="AAR04585.1"/>
    <property type="molecule type" value="Genomic_DNA"/>
</dbReference>
<dbReference type="EMBL" id="AY344271">
    <property type="protein sequence ID" value="AAR04586.1"/>
    <property type="molecule type" value="Genomic_DNA"/>
</dbReference>
<dbReference type="EMBL" id="AY344272">
    <property type="protein sequence ID" value="AAR04587.1"/>
    <property type="molecule type" value="Genomic_DNA"/>
</dbReference>
<dbReference type="EMBL" id="AY344273">
    <property type="protein sequence ID" value="AAR04588.1"/>
    <property type="molecule type" value="Genomic_DNA"/>
</dbReference>
<dbReference type="EMBL" id="AY344274">
    <property type="protein sequence ID" value="AAR04589.1"/>
    <property type="molecule type" value="Genomic_DNA"/>
</dbReference>
<dbReference type="EMBL" id="AY344275">
    <property type="protein sequence ID" value="AAR04590.1"/>
    <property type="molecule type" value="Genomic_DNA"/>
</dbReference>
<dbReference type="EMBL" id="AY344276">
    <property type="protein sequence ID" value="AAR04591.1"/>
    <property type="molecule type" value="Genomic_DNA"/>
</dbReference>
<dbReference type="EMBL" id="AY344277">
    <property type="protein sequence ID" value="AAR04592.1"/>
    <property type="molecule type" value="Genomic_DNA"/>
</dbReference>
<dbReference type="EMBL" id="AY344278">
    <property type="protein sequence ID" value="AAR04593.1"/>
    <property type="molecule type" value="Genomic_DNA"/>
</dbReference>
<dbReference type="EMBL" id="AY344279">
    <property type="protein sequence ID" value="AAR04594.1"/>
    <property type="molecule type" value="Genomic_DNA"/>
</dbReference>
<dbReference type="EMBL" id="AY344280">
    <property type="protein sequence ID" value="AAR04595.1"/>
    <property type="molecule type" value="Genomic_DNA"/>
</dbReference>
<dbReference type="EMBL" id="AY344281">
    <property type="protein sequence ID" value="AAR04596.1"/>
    <property type="molecule type" value="Genomic_DNA"/>
</dbReference>
<dbReference type="EMBL" id="AY344282">
    <property type="protein sequence ID" value="AAR04597.1"/>
    <property type="molecule type" value="Genomic_DNA"/>
</dbReference>
<dbReference type="EMBL" id="AY344283">
    <property type="protein sequence ID" value="AAR04598.1"/>
    <property type="molecule type" value="Genomic_DNA"/>
</dbReference>
<dbReference type="EMBL" id="AY344284">
    <property type="protein sequence ID" value="AAR04599.1"/>
    <property type="molecule type" value="Genomic_DNA"/>
</dbReference>
<dbReference type="EMBL" id="AY635241">
    <property type="protein sequence ID" value="AAT49147.1"/>
    <property type="molecule type" value="Genomic_DNA"/>
</dbReference>
<dbReference type="EMBL" id="AY635242">
    <property type="protein sequence ID" value="AAT49148.1"/>
    <property type="molecule type" value="Genomic_DNA"/>
</dbReference>
<dbReference type="EMBL" id="AY635243">
    <property type="protein sequence ID" value="AAT49149.1"/>
    <property type="molecule type" value="Genomic_DNA"/>
</dbReference>
<dbReference type="EMBL" id="AY635244">
    <property type="protein sequence ID" value="AAT49150.1"/>
    <property type="molecule type" value="Genomic_DNA"/>
</dbReference>
<dbReference type="EMBL" id="AY635245">
    <property type="protein sequence ID" value="AAT49151.1"/>
    <property type="molecule type" value="Genomic_DNA"/>
</dbReference>
<dbReference type="EMBL" id="AY635246">
    <property type="protein sequence ID" value="AAT49152.1"/>
    <property type="molecule type" value="Genomic_DNA"/>
</dbReference>
<dbReference type="EMBL" id="AE013599">
    <property type="protein sequence ID" value="AAF57959.1"/>
    <property type="molecule type" value="Genomic_DNA"/>
</dbReference>
<dbReference type="EMBL" id="AY113226">
    <property type="protein sequence ID" value="AAM29231.1"/>
    <property type="status" value="ALT_FRAME"/>
    <property type="molecule type" value="mRNA"/>
</dbReference>
<dbReference type="RefSeq" id="NP_477151.1">
    <property type="nucleotide sequence ID" value="NM_057803.5"/>
</dbReference>
<dbReference type="BioGRID" id="62583">
    <property type="interactions" value="4"/>
</dbReference>
<dbReference type="DIP" id="DIP-22625N"/>
<dbReference type="FunCoup" id="O46199">
    <property type="interactions" value="47"/>
</dbReference>
<dbReference type="IntAct" id="O46199">
    <property type="interactions" value="3"/>
</dbReference>
<dbReference type="STRING" id="7227.FBpp0086228"/>
<dbReference type="PaxDb" id="7227-FBpp0086228"/>
<dbReference type="EnsemblMetazoa" id="FBtr0087080">
    <property type="protein sequence ID" value="FBpp0086228"/>
    <property type="gene ID" value="FBgn0015584"/>
</dbReference>
<dbReference type="GeneID" id="36874"/>
<dbReference type="KEGG" id="dme:Dmel_CG8622"/>
<dbReference type="AGR" id="FB:FBgn0015584"/>
<dbReference type="CTD" id="36874"/>
<dbReference type="FlyBase" id="FBgn0015584">
    <property type="gene designation" value="Acp53Ea"/>
</dbReference>
<dbReference type="VEuPathDB" id="VectorBase:FBgn0015584"/>
<dbReference type="GeneTree" id="ENSGT00940000176318"/>
<dbReference type="HOGENOM" id="CLU_165703_0_0_1"/>
<dbReference type="InParanoid" id="O46199"/>
<dbReference type="OMA" id="WLACNRI"/>
<dbReference type="OrthoDB" id="7852344at2759"/>
<dbReference type="PhylomeDB" id="O46199"/>
<dbReference type="BioGRID-ORCS" id="36874">
    <property type="hits" value="0 hits in 1 CRISPR screen"/>
</dbReference>
<dbReference type="GenomeRNAi" id="36874"/>
<dbReference type="PRO" id="PR:O46199"/>
<dbReference type="Proteomes" id="UP000000803">
    <property type="component" value="Chromosome 2R"/>
</dbReference>
<dbReference type="Bgee" id="FBgn0015584">
    <property type="expression patterns" value="Expressed in spermatid in male reproductive gland and 54 other cell types or tissues"/>
</dbReference>
<dbReference type="GO" id="GO:0005615">
    <property type="term" value="C:extracellular space"/>
    <property type="evidence" value="ECO:0007005"/>
    <property type="project" value="FlyBase"/>
</dbReference>
<dbReference type="GO" id="GO:0019953">
    <property type="term" value="P:sexual reproduction"/>
    <property type="evidence" value="ECO:0007007"/>
    <property type="project" value="FlyBase"/>
</dbReference>
<dbReference type="GO" id="GO:0046692">
    <property type="term" value="P:sperm competition"/>
    <property type="evidence" value="ECO:0000304"/>
    <property type="project" value="FlyBase"/>
</dbReference>
<dbReference type="InterPro" id="IPR009392">
    <property type="entry name" value="ACP53EA"/>
</dbReference>
<dbReference type="Pfam" id="PF06313">
    <property type="entry name" value="ACP53EA"/>
    <property type="match status" value="1"/>
</dbReference>
<comment type="function">
    <text evidence="2">Responsible for physiological and behavioral changes in mated female flies.</text>
</comment>
<comment type="subcellular location">
    <subcellularLocation>
        <location evidence="3">Secreted</location>
    </subcellularLocation>
</comment>
<comment type="tissue specificity">
    <text evidence="2">Main cells of accessory gland and seminal fluid.</text>
</comment>
<comment type="sequence caution" evidence="3">
    <conflict type="erroneous translation">
        <sequence resource="EMBL-CDS" id="AAM29231"/>
    </conflict>
    <text>Wrong choice of frame.</text>
</comment>
<comment type="sequence caution" evidence="3">
    <conflict type="frameshift">
        <sequence resource="EMBL-CDS" id="AAM29231"/>
    </conflict>
</comment>
<accession>O46199</accession>
<accession>Q6GUV6</accession>
<accession>Q6VBF9</accession>
<accession>Q6VBG0</accession>
<accession>Q6VBG1</accession>
<accession>Q8MZD8</accession>
<reference key="1">
    <citation type="journal article" date="1997" name="Insect Biochem. Mol. Biol.">
        <title>New genes for male accessory gland proteins in Drosophila melanogaster.</title>
        <authorList>
            <person name="Wolfner M.F."/>
            <person name="Harada H.A."/>
            <person name="Bertram M.J."/>
            <person name="Stelick T.J."/>
            <person name="Kraus K.W."/>
            <person name="Kalb J.M."/>
            <person name="Lung Y.O."/>
            <person name="Neubaum D.M."/>
            <person name="Park M."/>
            <person name="Tram U.K."/>
        </authorList>
    </citation>
    <scope>NUCLEOTIDE SEQUENCE [MRNA]</scope>
    <scope>FUNCTION</scope>
    <scope>TISSUE SPECIFICITY</scope>
    <source>
        <strain>Canton-S</strain>
        <tissue>Male accessory gland</tissue>
    </source>
</reference>
<reference key="2">
    <citation type="journal article" date="2000" name="Genetics">
        <title>Molecular population genetics of male accessory gland proteins in Drosophila.</title>
        <authorList>
            <person name="Begun D.J."/>
            <person name="Whitley P."/>
            <person name="Todd B.L."/>
            <person name="Waldrip-Dail H.M."/>
            <person name="Clark A.G."/>
        </authorList>
    </citation>
    <scope>NUCLEOTIDE SEQUENCE [GENOMIC DNA]</scope>
    <source>
        <strain>WS1</strain>
        <strain>WS12</strain>
        <strain>WS16</strain>
        <strain>WS19</strain>
        <strain>WS26</strain>
        <strain>WS47</strain>
        <strain>WS49</strain>
        <strain>WS56</strain>
        <strain>WS6</strain>
        <strain>WS9</strain>
        <strain>ZIM2</strain>
        <strain>ZIM26</strain>
        <strain>ZIM30</strain>
        <strain>ZIM42</strain>
        <strain>ZIM56</strain>
    </source>
</reference>
<reference key="3">
    <citation type="journal article" date="2003" name="Evolution">
        <title>Population genetics of accessory gland proteins and sexual behavior in Drosophila melanogaster populations from Evolution Canyon.</title>
        <authorList>
            <person name="Panhuis T.M."/>
            <person name="Swanson W.J."/>
            <person name="Nunney L."/>
        </authorList>
    </citation>
    <scope>NUCLEOTIDE SEQUENCE [GENOMIC DNA]</scope>
    <source>
        <strain>NFS 5.1</strain>
        <strain>NFS 5.2</strain>
        <strain>NFS 5.3</strain>
        <strain>NFS 5.4</strain>
        <strain>NFS 6.1</strain>
        <strain>NFS 6.2</strain>
        <strain>NFS 6.3</strain>
        <strain>NFS 6.4</strain>
        <strain>NFS 7.8</strain>
        <strain>SFS 1.1</strain>
        <strain>SFS 1.2</strain>
        <strain>SFS 1.3</strain>
        <strain>SFS 1.4</strain>
        <strain>SFS 2.2</strain>
        <strain>SFS 2.3</strain>
        <strain>SFS 2.4</strain>
        <strain>SFS 3.1</strain>
        <strain>SFS 3.2</strain>
        <strain>SFS 3.3</strain>
        <strain>SFS 3.4</strain>
    </source>
</reference>
<reference key="4">
    <citation type="journal article" date="2004" name="Mol. Biol. Evol.">
        <title>Molecular evolution and population genetics of duplicated accessory gland protein genes in Drosophila.</title>
        <authorList>
            <person name="Holloway A.K."/>
            <person name="Begun D.J."/>
        </authorList>
    </citation>
    <scope>NUCLEOTIDE SEQUENCE [GENOMIC DNA]</scope>
    <source>
        <strain>M01</strain>
        <strain>M06</strain>
        <strain>M09</strain>
        <strain>M16</strain>
        <strain>M26</strain>
        <strain>M47</strain>
    </source>
</reference>
<reference key="5">
    <citation type="journal article" date="2000" name="Science">
        <title>The genome sequence of Drosophila melanogaster.</title>
        <authorList>
            <person name="Adams M.D."/>
            <person name="Celniker S.E."/>
            <person name="Holt R.A."/>
            <person name="Evans C.A."/>
            <person name="Gocayne J.D."/>
            <person name="Amanatides P.G."/>
            <person name="Scherer S.E."/>
            <person name="Li P.W."/>
            <person name="Hoskins R.A."/>
            <person name="Galle R.F."/>
            <person name="George R.A."/>
            <person name="Lewis S.E."/>
            <person name="Richards S."/>
            <person name="Ashburner M."/>
            <person name="Henderson S.N."/>
            <person name="Sutton G.G."/>
            <person name="Wortman J.R."/>
            <person name="Yandell M.D."/>
            <person name="Zhang Q."/>
            <person name="Chen L.X."/>
            <person name="Brandon R.C."/>
            <person name="Rogers Y.-H.C."/>
            <person name="Blazej R.G."/>
            <person name="Champe M."/>
            <person name="Pfeiffer B.D."/>
            <person name="Wan K.H."/>
            <person name="Doyle C."/>
            <person name="Baxter E.G."/>
            <person name="Helt G."/>
            <person name="Nelson C.R."/>
            <person name="Miklos G.L.G."/>
            <person name="Abril J.F."/>
            <person name="Agbayani A."/>
            <person name="An H.-J."/>
            <person name="Andrews-Pfannkoch C."/>
            <person name="Baldwin D."/>
            <person name="Ballew R.M."/>
            <person name="Basu A."/>
            <person name="Baxendale J."/>
            <person name="Bayraktaroglu L."/>
            <person name="Beasley E.M."/>
            <person name="Beeson K.Y."/>
            <person name="Benos P.V."/>
            <person name="Berman B.P."/>
            <person name="Bhandari D."/>
            <person name="Bolshakov S."/>
            <person name="Borkova D."/>
            <person name="Botchan M.R."/>
            <person name="Bouck J."/>
            <person name="Brokstein P."/>
            <person name="Brottier P."/>
            <person name="Burtis K.C."/>
            <person name="Busam D.A."/>
            <person name="Butler H."/>
            <person name="Cadieu E."/>
            <person name="Center A."/>
            <person name="Chandra I."/>
            <person name="Cherry J.M."/>
            <person name="Cawley S."/>
            <person name="Dahlke C."/>
            <person name="Davenport L.B."/>
            <person name="Davies P."/>
            <person name="de Pablos B."/>
            <person name="Delcher A."/>
            <person name="Deng Z."/>
            <person name="Mays A.D."/>
            <person name="Dew I."/>
            <person name="Dietz S.M."/>
            <person name="Dodson K."/>
            <person name="Doup L.E."/>
            <person name="Downes M."/>
            <person name="Dugan-Rocha S."/>
            <person name="Dunkov B.C."/>
            <person name="Dunn P."/>
            <person name="Durbin K.J."/>
            <person name="Evangelista C.C."/>
            <person name="Ferraz C."/>
            <person name="Ferriera S."/>
            <person name="Fleischmann W."/>
            <person name="Fosler C."/>
            <person name="Gabrielian A.E."/>
            <person name="Garg N.S."/>
            <person name="Gelbart W.M."/>
            <person name="Glasser K."/>
            <person name="Glodek A."/>
            <person name="Gong F."/>
            <person name="Gorrell J.H."/>
            <person name="Gu Z."/>
            <person name="Guan P."/>
            <person name="Harris M."/>
            <person name="Harris N.L."/>
            <person name="Harvey D.A."/>
            <person name="Heiman T.J."/>
            <person name="Hernandez J.R."/>
            <person name="Houck J."/>
            <person name="Hostin D."/>
            <person name="Houston K.A."/>
            <person name="Howland T.J."/>
            <person name="Wei M.-H."/>
            <person name="Ibegwam C."/>
            <person name="Jalali M."/>
            <person name="Kalush F."/>
            <person name="Karpen G.H."/>
            <person name="Ke Z."/>
            <person name="Kennison J.A."/>
            <person name="Ketchum K.A."/>
            <person name="Kimmel B.E."/>
            <person name="Kodira C.D."/>
            <person name="Kraft C.L."/>
            <person name="Kravitz S."/>
            <person name="Kulp D."/>
            <person name="Lai Z."/>
            <person name="Lasko P."/>
            <person name="Lei Y."/>
            <person name="Levitsky A.A."/>
            <person name="Li J.H."/>
            <person name="Li Z."/>
            <person name="Liang Y."/>
            <person name="Lin X."/>
            <person name="Liu X."/>
            <person name="Mattei B."/>
            <person name="McIntosh T.C."/>
            <person name="McLeod M.P."/>
            <person name="McPherson D."/>
            <person name="Merkulov G."/>
            <person name="Milshina N.V."/>
            <person name="Mobarry C."/>
            <person name="Morris J."/>
            <person name="Moshrefi A."/>
            <person name="Mount S.M."/>
            <person name="Moy M."/>
            <person name="Murphy B."/>
            <person name="Murphy L."/>
            <person name="Muzny D.M."/>
            <person name="Nelson D.L."/>
            <person name="Nelson D.R."/>
            <person name="Nelson K.A."/>
            <person name="Nixon K."/>
            <person name="Nusskern D.R."/>
            <person name="Pacleb J.M."/>
            <person name="Palazzolo M."/>
            <person name="Pittman G.S."/>
            <person name="Pan S."/>
            <person name="Pollard J."/>
            <person name="Puri V."/>
            <person name="Reese M.G."/>
            <person name="Reinert K."/>
            <person name="Remington K."/>
            <person name="Saunders R.D.C."/>
            <person name="Scheeler F."/>
            <person name="Shen H."/>
            <person name="Shue B.C."/>
            <person name="Siden-Kiamos I."/>
            <person name="Simpson M."/>
            <person name="Skupski M.P."/>
            <person name="Smith T.J."/>
            <person name="Spier E."/>
            <person name="Spradling A.C."/>
            <person name="Stapleton M."/>
            <person name="Strong R."/>
            <person name="Sun E."/>
            <person name="Svirskas R."/>
            <person name="Tector C."/>
            <person name="Turner R."/>
            <person name="Venter E."/>
            <person name="Wang A.H."/>
            <person name="Wang X."/>
            <person name="Wang Z.-Y."/>
            <person name="Wassarman D.A."/>
            <person name="Weinstock G.M."/>
            <person name="Weissenbach J."/>
            <person name="Williams S.M."/>
            <person name="Woodage T."/>
            <person name="Worley K.C."/>
            <person name="Wu D."/>
            <person name="Yang S."/>
            <person name="Yao Q.A."/>
            <person name="Ye J."/>
            <person name="Yeh R.-F."/>
            <person name="Zaveri J.S."/>
            <person name="Zhan M."/>
            <person name="Zhang G."/>
            <person name="Zhao Q."/>
            <person name="Zheng L."/>
            <person name="Zheng X.H."/>
            <person name="Zhong F.N."/>
            <person name="Zhong W."/>
            <person name="Zhou X."/>
            <person name="Zhu S.C."/>
            <person name="Zhu X."/>
            <person name="Smith H.O."/>
            <person name="Gibbs R.A."/>
            <person name="Myers E.W."/>
            <person name="Rubin G.M."/>
            <person name="Venter J.C."/>
        </authorList>
    </citation>
    <scope>NUCLEOTIDE SEQUENCE [LARGE SCALE GENOMIC DNA]</scope>
    <source>
        <strain>Berkeley</strain>
    </source>
</reference>
<reference key="6">
    <citation type="journal article" date="2002" name="Genome Biol.">
        <title>Annotation of the Drosophila melanogaster euchromatic genome: a systematic review.</title>
        <authorList>
            <person name="Misra S."/>
            <person name="Crosby M.A."/>
            <person name="Mungall C.J."/>
            <person name="Matthews B.B."/>
            <person name="Campbell K.S."/>
            <person name="Hradecky P."/>
            <person name="Huang Y."/>
            <person name="Kaminker J.S."/>
            <person name="Millburn G.H."/>
            <person name="Prochnik S.E."/>
            <person name="Smith C.D."/>
            <person name="Tupy J.L."/>
            <person name="Whitfield E.J."/>
            <person name="Bayraktaroglu L."/>
            <person name="Berman B.P."/>
            <person name="Bettencourt B.R."/>
            <person name="Celniker S.E."/>
            <person name="de Grey A.D.N.J."/>
            <person name="Drysdale R.A."/>
            <person name="Harris N.L."/>
            <person name="Richter J."/>
            <person name="Russo S."/>
            <person name="Schroeder A.J."/>
            <person name="Shu S.Q."/>
            <person name="Stapleton M."/>
            <person name="Yamada C."/>
            <person name="Ashburner M."/>
            <person name="Gelbart W.M."/>
            <person name="Rubin G.M."/>
            <person name="Lewis S.E."/>
        </authorList>
    </citation>
    <scope>GENOME REANNOTATION</scope>
    <source>
        <strain>Berkeley</strain>
    </source>
</reference>
<reference key="7">
    <citation type="journal article" date="2002" name="Genome Biol.">
        <title>A Drosophila full-length cDNA resource.</title>
        <authorList>
            <person name="Stapleton M."/>
            <person name="Carlson J.W."/>
            <person name="Brokstein P."/>
            <person name="Yu C."/>
            <person name="Champe M."/>
            <person name="George R.A."/>
            <person name="Guarin H."/>
            <person name="Kronmiller B."/>
            <person name="Pacleb J.M."/>
            <person name="Park S."/>
            <person name="Wan K.H."/>
            <person name="Rubin G.M."/>
            <person name="Celniker S.E."/>
        </authorList>
    </citation>
    <scope>NUCLEOTIDE SEQUENCE [LARGE SCALE MRNA]</scope>
    <source>
        <strain>Berkeley</strain>
        <tissue>Testis</tissue>
    </source>
</reference>
<gene>
    <name type="primary">Acp53Ea</name>
    <name type="ORF">CG8622</name>
</gene>
<sequence length="120" mass="13607">MKLIKVTLVFSLLALVFVAQTEAQNPIWENWLACNRIGTKALASLLRETIPTVRNLLNCIDFNPPTDIGNSYLSKLKLYYELVKRGALDKTQCLIVPLKESVRLLRPYVKSLETNKCLGE</sequence>
<proteinExistence type="evidence at transcript level"/>
<organism>
    <name type="scientific">Drosophila melanogaster</name>
    <name type="common">Fruit fly</name>
    <dbReference type="NCBI Taxonomy" id="7227"/>
    <lineage>
        <taxon>Eukaryota</taxon>
        <taxon>Metazoa</taxon>
        <taxon>Ecdysozoa</taxon>
        <taxon>Arthropoda</taxon>
        <taxon>Hexapoda</taxon>
        <taxon>Insecta</taxon>
        <taxon>Pterygota</taxon>
        <taxon>Neoptera</taxon>
        <taxon>Endopterygota</taxon>
        <taxon>Diptera</taxon>
        <taxon>Brachycera</taxon>
        <taxon>Muscomorpha</taxon>
        <taxon>Ephydroidea</taxon>
        <taxon>Drosophilidae</taxon>
        <taxon>Drosophila</taxon>
        <taxon>Sophophora</taxon>
    </lineage>
</organism>
<name>A53E_DROME</name>
<protein>
    <recommendedName>
        <fullName>Accessory gland protein Acp53Ea</fullName>
    </recommendedName>
</protein>
<keyword id="KW-0085">Behavior</keyword>
<keyword id="KW-1185">Reference proteome</keyword>
<keyword id="KW-0964">Secreted</keyword>
<keyword id="KW-0732">Signal</keyword>